<gene>
    <name evidence="1" type="primary">xseA</name>
    <name type="ordered locus">XfasM23_2006</name>
</gene>
<feature type="chain" id="PRO_1000122103" description="Exodeoxyribonuclease 7 large subunit">
    <location>
        <begin position="1"/>
        <end position="444"/>
    </location>
</feature>
<dbReference type="EC" id="3.1.11.6" evidence="1"/>
<dbReference type="EMBL" id="CP001011">
    <property type="protein sequence ID" value="ACB93405.1"/>
    <property type="molecule type" value="Genomic_DNA"/>
</dbReference>
<dbReference type="RefSeq" id="WP_004090422.1">
    <property type="nucleotide sequence ID" value="NC_010577.1"/>
</dbReference>
<dbReference type="SMR" id="B2I9F0"/>
<dbReference type="GeneID" id="93905761"/>
<dbReference type="KEGG" id="xfn:XfasM23_2006"/>
<dbReference type="HOGENOM" id="CLU_023625_3_1_6"/>
<dbReference type="Proteomes" id="UP000001698">
    <property type="component" value="Chromosome"/>
</dbReference>
<dbReference type="GO" id="GO:0005737">
    <property type="term" value="C:cytoplasm"/>
    <property type="evidence" value="ECO:0007669"/>
    <property type="project" value="UniProtKB-SubCell"/>
</dbReference>
<dbReference type="GO" id="GO:0009318">
    <property type="term" value="C:exodeoxyribonuclease VII complex"/>
    <property type="evidence" value="ECO:0007669"/>
    <property type="project" value="InterPro"/>
</dbReference>
<dbReference type="GO" id="GO:0008855">
    <property type="term" value="F:exodeoxyribonuclease VII activity"/>
    <property type="evidence" value="ECO:0007669"/>
    <property type="project" value="UniProtKB-UniRule"/>
</dbReference>
<dbReference type="GO" id="GO:0003676">
    <property type="term" value="F:nucleic acid binding"/>
    <property type="evidence" value="ECO:0007669"/>
    <property type="project" value="InterPro"/>
</dbReference>
<dbReference type="GO" id="GO:0006308">
    <property type="term" value="P:DNA catabolic process"/>
    <property type="evidence" value="ECO:0007669"/>
    <property type="project" value="UniProtKB-UniRule"/>
</dbReference>
<dbReference type="CDD" id="cd04489">
    <property type="entry name" value="ExoVII_LU_OBF"/>
    <property type="match status" value="1"/>
</dbReference>
<dbReference type="HAMAP" id="MF_00378">
    <property type="entry name" value="Exonuc_7_L"/>
    <property type="match status" value="1"/>
</dbReference>
<dbReference type="InterPro" id="IPR003753">
    <property type="entry name" value="Exonuc_VII_L"/>
</dbReference>
<dbReference type="InterPro" id="IPR020579">
    <property type="entry name" value="Exonuc_VII_lsu_C"/>
</dbReference>
<dbReference type="InterPro" id="IPR025824">
    <property type="entry name" value="OB-fold_nuc-bd_dom"/>
</dbReference>
<dbReference type="NCBIfam" id="TIGR00237">
    <property type="entry name" value="xseA"/>
    <property type="match status" value="1"/>
</dbReference>
<dbReference type="PANTHER" id="PTHR30008">
    <property type="entry name" value="EXODEOXYRIBONUCLEASE 7 LARGE SUBUNIT"/>
    <property type="match status" value="1"/>
</dbReference>
<dbReference type="PANTHER" id="PTHR30008:SF0">
    <property type="entry name" value="EXODEOXYRIBONUCLEASE 7 LARGE SUBUNIT"/>
    <property type="match status" value="1"/>
</dbReference>
<dbReference type="Pfam" id="PF02601">
    <property type="entry name" value="Exonuc_VII_L"/>
    <property type="match status" value="1"/>
</dbReference>
<dbReference type="Pfam" id="PF13742">
    <property type="entry name" value="tRNA_anti_2"/>
    <property type="match status" value="1"/>
</dbReference>
<protein>
    <recommendedName>
        <fullName evidence="1">Exodeoxyribonuclease 7 large subunit</fullName>
        <ecNumber evidence="1">3.1.11.6</ecNumber>
    </recommendedName>
    <alternativeName>
        <fullName evidence="1">Exodeoxyribonuclease VII large subunit</fullName>
        <shortName evidence="1">Exonuclease VII large subunit</shortName>
    </alternativeName>
</protein>
<evidence type="ECO:0000255" key="1">
    <source>
        <dbReference type="HAMAP-Rule" id="MF_00378"/>
    </source>
</evidence>
<organism>
    <name type="scientific">Xylella fastidiosa (strain M23)</name>
    <dbReference type="NCBI Taxonomy" id="405441"/>
    <lineage>
        <taxon>Bacteria</taxon>
        <taxon>Pseudomonadati</taxon>
        <taxon>Pseudomonadota</taxon>
        <taxon>Gammaproteobacteria</taxon>
        <taxon>Lysobacterales</taxon>
        <taxon>Lysobacteraceae</taxon>
        <taxon>Xylella</taxon>
    </lineage>
</organism>
<reference key="1">
    <citation type="journal article" date="2010" name="J. Bacteriol.">
        <title>Whole genome sequences of two Xylella fastidiosa strains (M12 and M23) causing almond leaf scorch disease in California.</title>
        <authorList>
            <person name="Chen J."/>
            <person name="Xie G."/>
            <person name="Han S."/>
            <person name="Chertkov O."/>
            <person name="Sims D."/>
            <person name="Civerolo E.L."/>
        </authorList>
    </citation>
    <scope>NUCLEOTIDE SEQUENCE [LARGE SCALE GENOMIC DNA]</scope>
    <source>
        <strain>M23</strain>
    </source>
</reference>
<proteinExistence type="inferred from homology"/>
<comment type="function">
    <text evidence="1">Bidirectionally degrades single-stranded DNA into large acid-insoluble oligonucleotides, which are then degraded further into small acid-soluble oligonucleotides.</text>
</comment>
<comment type="catalytic activity">
    <reaction evidence="1">
        <text>Exonucleolytic cleavage in either 5'- to 3'- or 3'- to 5'-direction to yield nucleoside 5'-phosphates.</text>
        <dbReference type="EC" id="3.1.11.6"/>
    </reaction>
</comment>
<comment type="subunit">
    <text evidence="1">Heterooligomer composed of large and small subunits.</text>
</comment>
<comment type="subcellular location">
    <subcellularLocation>
        <location evidence="1">Cytoplasm</location>
    </subcellularLocation>
</comment>
<comment type="similarity">
    <text evidence="1">Belongs to the XseA family.</text>
</comment>
<keyword id="KW-0963">Cytoplasm</keyword>
<keyword id="KW-0269">Exonuclease</keyword>
<keyword id="KW-0378">Hydrolase</keyword>
<keyword id="KW-0540">Nuclease</keyword>
<accession>B2I9F0</accession>
<name>EX7L_XYLF2</name>
<sequence length="444" mass="49782">MQHRDEILTPSQLNTLARDLLESAFPLVWIEGELGNVSRPSSGHLYVTLKDAQAQVRCAMFKPKSQWLTFQPREGLRVLARGRLTLYEARGDYQIVLDHLEESGEGALRRAFEQLRIRLEAEGLFDPARKQPLPVHPRRIAVITSPSGAVIRDILSVLMRRFPLVEIELLPSLVQGDTAAAQITHLLGGADSSGRYDAILIARGGGSLEDLWAFNNEQLARTIAAAHTPVISAIGHETDFTLADFAADIRAPTPSVAAELLVPDQRALRQHLGQLQQRLLHLQQHRLDQAIQRADQLGLRLQARNPEMHLRLLAQRQAEAGRRLQQCLHHVLDRAQGQLRNHHTRLYALNPRQQIAGLQKHLKHLNPQQPLQRRLQQEQLRLHGLVRALEAVNPLATVARGYALVRRADNNTLVRDSAQVCVGDVLDTKLAHGQLRVRVEISST</sequence>